<sequence>MTHAHITTWVVALILFVVAIALQAKGHEKTKMLHMLLRLFYILIIATGAWILHSMSSFPFLYIVKVIVGLWVIGTMEMILVRTAKGKNTNVLWLQFIVAFVVVLYLGFKLPFGFSFFS</sequence>
<organism>
    <name type="scientific">Anoxybacillus flavithermus (strain DSM 21510 / WK1)</name>
    <dbReference type="NCBI Taxonomy" id="491915"/>
    <lineage>
        <taxon>Bacteria</taxon>
        <taxon>Bacillati</taxon>
        <taxon>Bacillota</taxon>
        <taxon>Bacilli</taxon>
        <taxon>Bacillales</taxon>
        <taxon>Anoxybacillaceae</taxon>
        <taxon>Anoxybacillus</taxon>
    </lineage>
</organism>
<reference key="1">
    <citation type="journal article" date="2008" name="Genome Biol.">
        <title>Encapsulated in silica: genome, proteome and physiology of the thermophilic bacterium Anoxybacillus flavithermus WK1.</title>
        <authorList>
            <person name="Saw J.H."/>
            <person name="Mountain B.W."/>
            <person name="Feng L."/>
            <person name="Omelchenko M.V."/>
            <person name="Hou S."/>
            <person name="Saito J.A."/>
            <person name="Stott M.B."/>
            <person name="Li D."/>
            <person name="Zhao G."/>
            <person name="Wu J."/>
            <person name="Galperin M.Y."/>
            <person name="Koonin E.V."/>
            <person name="Makarova K.S."/>
            <person name="Wolf Y.I."/>
            <person name="Rigden D.J."/>
            <person name="Dunfield P.F."/>
            <person name="Wang L."/>
            <person name="Alam M."/>
        </authorList>
    </citation>
    <scope>NUCLEOTIDE SEQUENCE [LARGE SCALE GENOMIC DNA]</scope>
    <source>
        <strain>DSM 21510 / WK1</strain>
    </source>
</reference>
<protein>
    <recommendedName>
        <fullName evidence="1">UPF0344 protein Aflv_2205</fullName>
    </recommendedName>
</protein>
<accession>B7GLW3</accession>
<keyword id="KW-1003">Cell membrane</keyword>
<keyword id="KW-0472">Membrane</keyword>
<keyword id="KW-0812">Transmembrane</keyword>
<keyword id="KW-1133">Transmembrane helix</keyword>
<comment type="subcellular location">
    <subcellularLocation>
        <location evidence="1">Cell membrane</location>
        <topology evidence="1">Multi-pass membrane protein</topology>
    </subcellularLocation>
</comment>
<comment type="similarity">
    <text evidence="1">Belongs to the UPF0344 family.</text>
</comment>
<dbReference type="EMBL" id="CP000922">
    <property type="protein sequence ID" value="ACJ34564.1"/>
    <property type="molecule type" value="Genomic_DNA"/>
</dbReference>
<dbReference type="RefSeq" id="WP_012575741.1">
    <property type="nucleotide sequence ID" value="NC_011567.1"/>
</dbReference>
<dbReference type="STRING" id="491915.Aflv_2205"/>
<dbReference type="GeneID" id="7038458"/>
<dbReference type="KEGG" id="afl:Aflv_2205"/>
<dbReference type="PATRIC" id="fig|491915.6.peg.2264"/>
<dbReference type="eggNOG" id="ENOG5032W2Q">
    <property type="taxonomic scope" value="Bacteria"/>
</dbReference>
<dbReference type="HOGENOM" id="CLU_146641_1_1_9"/>
<dbReference type="Proteomes" id="UP000000742">
    <property type="component" value="Chromosome"/>
</dbReference>
<dbReference type="GO" id="GO:0005886">
    <property type="term" value="C:plasma membrane"/>
    <property type="evidence" value="ECO:0007669"/>
    <property type="project" value="UniProtKB-SubCell"/>
</dbReference>
<dbReference type="HAMAP" id="MF_01536">
    <property type="entry name" value="UPF0344"/>
    <property type="match status" value="1"/>
</dbReference>
<dbReference type="InterPro" id="IPR010899">
    <property type="entry name" value="UPF0344"/>
</dbReference>
<dbReference type="NCBIfam" id="NF010196">
    <property type="entry name" value="PRK13673.1-3"/>
    <property type="match status" value="1"/>
</dbReference>
<dbReference type="Pfam" id="PF07457">
    <property type="entry name" value="DUF1516"/>
    <property type="match status" value="1"/>
</dbReference>
<feature type="chain" id="PRO_1000198637" description="UPF0344 protein Aflv_2205">
    <location>
        <begin position="1"/>
        <end position="118"/>
    </location>
</feature>
<feature type="transmembrane region" description="Helical" evidence="1">
    <location>
        <begin position="4"/>
        <end position="24"/>
    </location>
</feature>
<feature type="transmembrane region" description="Helical" evidence="1">
    <location>
        <begin position="32"/>
        <end position="52"/>
    </location>
</feature>
<feature type="transmembrane region" description="Helical" evidence="1">
    <location>
        <begin position="60"/>
        <end position="80"/>
    </location>
</feature>
<feature type="transmembrane region" description="Helical" evidence="1">
    <location>
        <begin position="96"/>
        <end position="116"/>
    </location>
</feature>
<proteinExistence type="inferred from homology"/>
<name>Y2205_ANOFW</name>
<evidence type="ECO:0000255" key="1">
    <source>
        <dbReference type="HAMAP-Rule" id="MF_01536"/>
    </source>
</evidence>
<gene>
    <name type="ordered locus">Aflv_2205</name>
</gene>